<evidence type="ECO:0000255" key="1"/>
<evidence type="ECO:0000305" key="2"/>
<keyword id="KW-0472">Membrane</keyword>
<keyword id="KW-1185">Reference proteome</keyword>
<keyword id="KW-0812">Transmembrane</keyword>
<keyword id="KW-1133">Transmembrane helix</keyword>
<comment type="subcellular location">
    <subcellularLocation>
        <location evidence="2">Membrane</location>
        <topology evidence="2">Multi-pass membrane protein</topology>
    </subcellularLocation>
</comment>
<comment type="similarity">
    <text evidence="2">Belongs to the nematode receptor-like protein srd family.</text>
</comment>
<name>SRD19_CAEEL</name>
<sequence>MIIFFEIWHWSWALLGCYLNLLLTYLAIFRSPKAIKSYATLIINFAATDFVECALDLFIQTRLVAVPGEAKLVYIFNGPCKYTGSLSCKVGLSFLLHCLTHSVWSLLISFGYRFYILHNPALSRLTLLKITIMFYIPSLVQALTYWTLFVPREKILPLAKQWFPYYDLETETGVLTGVIDLTNFVAVYAVAHICLPFFPVYITIFVLRQKIMKYLGGQSQMMSQDTKAAHTQLLRALTTQAIIPMFLGIAVLLYFSSQSGLLKSPILEYSIFSVAILMPALSPITYLYFVRPYRQKVKRIIRHPFKLLSRPHERATSNSGVFYSGDHPTHFSKPVIAVH</sequence>
<gene>
    <name type="primary">srd-19</name>
    <name type="ORF">F53F1.11</name>
</gene>
<feature type="chain" id="PRO_0000104513" description="Serpentine receptor class delta-19">
    <location>
        <begin position="1"/>
        <end position="339"/>
    </location>
</feature>
<feature type="transmembrane region" description="Helical" evidence="1">
    <location>
        <begin position="2"/>
        <end position="22"/>
    </location>
</feature>
<feature type="transmembrane region" description="Helical" evidence="1">
    <location>
        <begin position="39"/>
        <end position="59"/>
    </location>
</feature>
<feature type="transmembrane region" description="Helical" evidence="1">
    <location>
        <begin position="90"/>
        <end position="110"/>
    </location>
</feature>
<feature type="transmembrane region" description="Helical" evidence="1">
    <location>
        <begin position="130"/>
        <end position="150"/>
    </location>
</feature>
<feature type="transmembrane region" description="Helical" evidence="1">
    <location>
        <begin position="187"/>
        <end position="207"/>
    </location>
</feature>
<feature type="transmembrane region" description="Helical" evidence="1">
    <location>
        <begin position="242"/>
        <end position="262"/>
    </location>
</feature>
<feature type="transmembrane region" description="Helical" evidence="1">
    <location>
        <begin position="270"/>
        <end position="290"/>
    </location>
</feature>
<proteinExistence type="inferred from homology"/>
<protein>
    <recommendedName>
        <fullName>Serpentine receptor class delta-19</fullName>
        <shortName>Protein srd-19</shortName>
    </recommendedName>
</protein>
<accession>P92002</accession>
<dbReference type="EMBL" id="Z81088">
    <property type="protein sequence ID" value="CAB03132.1"/>
    <property type="molecule type" value="Genomic_DNA"/>
</dbReference>
<dbReference type="PIR" id="T22571">
    <property type="entry name" value="T22571"/>
</dbReference>
<dbReference type="RefSeq" id="NP_506331.1">
    <property type="nucleotide sequence ID" value="NM_073930.1"/>
</dbReference>
<dbReference type="SMR" id="P92002"/>
<dbReference type="FunCoup" id="P92002">
    <property type="interactions" value="12"/>
</dbReference>
<dbReference type="PaxDb" id="6239-F53F1.11"/>
<dbReference type="EnsemblMetazoa" id="F53F1.11.1">
    <property type="protein sequence ID" value="F53F1.11.1"/>
    <property type="gene ID" value="WBGene00005097"/>
</dbReference>
<dbReference type="GeneID" id="191808"/>
<dbReference type="KEGG" id="cel:CELE_F53F1.11"/>
<dbReference type="UCSC" id="F53F1.11">
    <property type="organism name" value="c. elegans"/>
</dbReference>
<dbReference type="AGR" id="WB:WBGene00005097"/>
<dbReference type="CTD" id="191808"/>
<dbReference type="WormBase" id="F53F1.11">
    <property type="protein sequence ID" value="CE10952"/>
    <property type="gene ID" value="WBGene00005097"/>
    <property type="gene designation" value="srd-19"/>
</dbReference>
<dbReference type="eggNOG" id="ENOG502TJEM">
    <property type="taxonomic scope" value="Eukaryota"/>
</dbReference>
<dbReference type="GeneTree" id="ENSGT00970000195825"/>
<dbReference type="HOGENOM" id="CLU_057924_3_0_1"/>
<dbReference type="InParanoid" id="P92002"/>
<dbReference type="OrthoDB" id="5859769at2759"/>
<dbReference type="PhylomeDB" id="P92002"/>
<dbReference type="PRO" id="PR:P92002"/>
<dbReference type="Proteomes" id="UP000001940">
    <property type="component" value="Chromosome V"/>
</dbReference>
<dbReference type="GO" id="GO:0016020">
    <property type="term" value="C:membrane"/>
    <property type="evidence" value="ECO:0007669"/>
    <property type="project" value="UniProtKB-SubCell"/>
</dbReference>
<dbReference type="Gene3D" id="1.20.1070.10">
    <property type="entry name" value="Rhodopsin 7-helix transmembrane proteins"/>
    <property type="match status" value="1"/>
</dbReference>
<dbReference type="InterPro" id="IPR019421">
    <property type="entry name" value="7TM_GPCR_serpentine_rcpt_Srd"/>
</dbReference>
<dbReference type="InterPro" id="IPR050920">
    <property type="entry name" value="Nematode_rcpt-like_delta"/>
</dbReference>
<dbReference type="PANTHER" id="PTHR22945:SF40">
    <property type="entry name" value="SERPENTINE RECEPTOR, CLASS D (DELTA)-RELATED"/>
    <property type="match status" value="1"/>
</dbReference>
<dbReference type="PANTHER" id="PTHR22945">
    <property type="entry name" value="SERPENTINE RECEPTOR, CLASS D DELTA"/>
    <property type="match status" value="1"/>
</dbReference>
<dbReference type="Pfam" id="PF10317">
    <property type="entry name" value="7TM_GPCR_Srd"/>
    <property type="match status" value="1"/>
</dbReference>
<dbReference type="SUPFAM" id="SSF81321">
    <property type="entry name" value="Family A G protein-coupled receptor-like"/>
    <property type="match status" value="1"/>
</dbReference>
<reference key="1">
    <citation type="journal article" date="1998" name="Science">
        <title>Genome sequence of the nematode C. elegans: a platform for investigating biology.</title>
        <authorList>
            <consortium name="The C. elegans sequencing consortium"/>
        </authorList>
    </citation>
    <scope>NUCLEOTIDE SEQUENCE [LARGE SCALE GENOMIC DNA]</scope>
    <source>
        <strain>Bristol N2</strain>
    </source>
</reference>
<organism>
    <name type="scientific">Caenorhabditis elegans</name>
    <dbReference type="NCBI Taxonomy" id="6239"/>
    <lineage>
        <taxon>Eukaryota</taxon>
        <taxon>Metazoa</taxon>
        <taxon>Ecdysozoa</taxon>
        <taxon>Nematoda</taxon>
        <taxon>Chromadorea</taxon>
        <taxon>Rhabditida</taxon>
        <taxon>Rhabditina</taxon>
        <taxon>Rhabditomorpha</taxon>
        <taxon>Rhabditoidea</taxon>
        <taxon>Rhabditidae</taxon>
        <taxon>Peloderinae</taxon>
        <taxon>Caenorhabditis</taxon>
    </lineage>
</organism>